<protein>
    <recommendedName>
        <fullName evidence="1">Orotidine 5'-phosphate decarboxylase</fullName>
        <ecNumber evidence="1">4.1.1.23</ecNumber>
    </recommendedName>
    <alternativeName>
        <fullName evidence="1">OMP decarboxylase</fullName>
        <shortName evidence="1">OMPDCase</shortName>
        <shortName evidence="1">OMPdecase</shortName>
    </alternativeName>
</protein>
<comment type="function">
    <text evidence="1">Catalyzes the decarboxylation of orotidine 5'-monophosphate (OMP) to uridine 5'-monophosphate (UMP).</text>
</comment>
<comment type="catalytic activity">
    <reaction evidence="1">
        <text>orotidine 5'-phosphate + H(+) = UMP + CO2</text>
        <dbReference type="Rhea" id="RHEA:11596"/>
        <dbReference type="ChEBI" id="CHEBI:15378"/>
        <dbReference type="ChEBI" id="CHEBI:16526"/>
        <dbReference type="ChEBI" id="CHEBI:57538"/>
        <dbReference type="ChEBI" id="CHEBI:57865"/>
        <dbReference type="EC" id="4.1.1.23"/>
    </reaction>
</comment>
<comment type="pathway">
    <text evidence="1">Pyrimidine metabolism; UMP biosynthesis via de novo pathway; UMP from orotate: step 2/2.</text>
</comment>
<comment type="subunit">
    <text evidence="1">Homodimer.</text>
</comment>
<comment type="similarity">
    <text evidence="1">Belongs to the OMP decarboxylase family. Type 1 subfamily.</text>
</comment>
<feature type="chain" id="PRO_0000241863" description="Orotidine 5'-phosphate decarboxylase">
    <location>
        <begin position="1"/>
        <end position="236"/>
    </location>
</feature>
<feature type="active site" description="Proton donor" evidence="1">
    <location>
        <position position="62"/>
    </location>
</feature>
<feature type="binding site" evidence="1">
    <location>
        <position position="12"/>
    </location>
    <ligand>
        <name>substrate</name>
    </ligand>
</feature>
<feature type="binding site" evidence="1">
    <location>
        <position position="34"/>
    </location>
    <ligand>
        <name>substrate</name>
    </ligand>
</feature>
<feature type="binding site" evidence="1">
    <location>
        <begin position="60"/>
        <end position="69"/>
    </location>
    <ligand>
        <name>substrate</name>
    </ligand>
</feature>
<feature type="binding site" evidence="1">
    <location>
        <position position="123"/>
    </location>
    <ligand>
        <name>substrate</name>
    </ligand>
</feature>
<feature type="binding site" evidence="1">
    <location>
        <position position="184"/>
    </location>
    <ligand>
        <name>substrate</name>
    </ligand>
</feature>
<feature type="binding site" evidence="1">
    <location>
        <position position="193"/>
    </location>
    <ligand>
        <name>substrate</name>
    </ligand>
</feature>
<feature type="binding site" evidence="1">
    <location>
        <position position="213"/>
    </location>
    <ligand>
        <name>substrate</name>
    </ligand>
</feature>
<feature type="binding site" evidence="1">
    <location>
        <position position="214"/>
    </location>
    <ligand>
        <name>substrate</name>
    </ligand>
</feature>
<organism>
    <name type="scientific">Gluconobacter oxydans (strain 621H)</name>
    <name type="common">Gluconobacter suboxydans</name>
    <dbReference type="NCBI Taxonomy" id="290633"/>
    <lineage>
        <taxon>Bacteria</taxon>
        <taxon>Pseudomonadati</taxon>
        <taxon>Pseudomonadota</taxon>
        <taxon>Alphaproteobacteria</taxon>
        <taxon>Acetobacterales</taxon>
        <taxon>Acetobacteraceae</taxon>
        <taxon>Gluconobacter</taxon>
    </lineage>
</organism>
<keyword id="KW-0210">Decarboxylase</keyword>
<keyword id="KW-0456">Lyase</keyword>
<keyword id="KW-0665">Pyrimidine biosynthesis</keyword>
<keyword id="KW-1185">Reference proteome</keyword>
<gene>
    <name evidence="1" type="primary">pyrF</name>
    <name type="ordered locus">GOX2235</name>
</gene>
<evidence type="ECO:0000255" key="1">
    <source>
        <dbReference type="HAMAP-Rule" id="MF_01200"/>
    </source>
</evidence>
<name>PYRF_GLUOX</name>
<reference key="1">
    <citation type="journal article" date="2005" name="Nat. Biotechnol.">
        <title>Complete genome sequence of the acetic acid bacterium Gluconobacter oxydans.</title>
        <authorList>
            <person name="Prust C."/>
            <person name="Hoffmeister M."/>
            <person name="Liesegang H."/>
            <person name="Wiezer A."/>
            <person name="Fricke W.F."/>
            <person name="Ehrenreich A."/>
            <person name="Gottschalk G."/>
            <person name="Deppenmeier U."/>
        </authorList>
    </citation>
    <scope>NUCLEOTIDE SEQUENCE [LARGE SCALE GENOMIC DNA]</scope>
    <source>
        <strain>621H</strain>
    </source>
</reference>
<sequence length="236" mass="24596">MSRRTRLIAALDTASRSTAQDWADSLKNDVDAIKLGLEFTYACGLDAVKTVSAGHELFLDLKLHDIPHTVASGLTALAPLRPALTTIHASGGSEMIARSREALESAFPADTKRPKLLAVTVLTSMNAEGLLDIGVNATPQEQVLRLGKLAISAGADGLVCSAHEIAPLRDALGDEPVLVVPGIRPAGSASDDQKRIMTPGQAAQAGADWIVVGRPITKAADPVLAARAIMEELASA</sequence>
<dbReference type="EC" id="4.1.1.23" evidence="1"/>
<dbReference type="EMBL" id="CP000009">
    <property type="protein sequence ID" value="AAW61969.1"/>
    <property type="molecule type" value="Genomic_DNA"/>
</dbReference>
<dbReference type="RefSeq" id="WP_011253739.1">
    <property type="nucleotide sequence ID" value="NC_006677.1"/>
</dbReference>
<dbReference type="SMR" id="Q5FNS8"/>
<dbReference type="STRING" id="290633.GOX2235"/>
<dbReference type="KEGG" id="gox:GOX2235"/>
<dbReference type="eggNOG" id="COG0284">
    <property type="taxonomic scope" value="Bacteria"/>
</dbReference>
<dbReference type="HOGENOM" id="CLU_067069_0_0_5"/>
<dbReference type="UniPathway" id="UPA00070">
    <property type="reaction ID" value="UER00120"/>
</dbReference>
<dbReference type="Proteomes" id="UP000006375">
    <property type="component" value="Chromosome"/>
</dbReference>
<dbReference type="GO" id="GO:0005829">
    <property type="term" value="C:cytosol"/>
    <property type="evidence" value="ECO:0007669"/>
    <property type="project" value="TreeGrafter"/>
</dbReference>
<dbReference type="GO" id="GO:0004590">
    <property type="term" value="F:orotidine-5'-phosphate decarboxylase activity"/>
    <property type="evidence" value="ECO:0007669"/>
    <property type="project" value="UniProtKB-UniRule"/>
</dbReference>
<dbReference type="GO" id="GO:0006207">
    <property type="term" value="P:'de novo' pyrimidine nucleobase biosynthetic process"/>
    <property type="evidence" value="ECO:0007669"/>
    <property type="project" value="InterPro"/>
</dbReference>
<dbReference type="GO" id="GO:0044205">
    <property type="term" value="P:'de novo' UMP biosynthetic process"/>
    <property type="evidence" value="ECO:0007669"/>
    <property type="project" value="UniProtKB-UniRule"/>
</dbReference>
<dbReference type="CDD" id="cd04725">
    <property type="entry name" value="OMP_decarboxylase_like"/>
    <property type="match status" value="1"/>
</dbReference>
<dbReference type="FunFam" id="3.20.20.70:FF:000015">
    <property type="entry name" value="Orotidine 5'-phosphate decarboxylase"/>
    <property type="match status" value="1"/>
</dbReference>
<dbReference type="Gene3D" id="3.20.20.70">
    <property type="entry name" value="Aldolase class I"/>
    <property type="match status" value="1"/>
</dbReference>
<dbReference type="HAMAP" id="MF_01200_B">
    <property type="entry name" value="OMPdecase_type1_B"/>
    <property type="match status" value="1"/>
</dbReference>
<dbReference type="InterPro" id="IPR013785">
    <property type="entry name" value="Aldolase_TIM"/>
</dbReference>
<dbReference type="InterPro" id="IPR014732">
    <property type="entry name" value="OMPdecase"/>
</dbReference>
<dbReference type="InterPro" id="IPR018089">
    <property type="entry name" value="OMPdecase_AS"/>
</dbReference>
<dbReference type="InterPro" id="IPR047596">
    <property type="entry name" value="OMPdecase_bac"/>
</dbReference>
<dbReference type="InterPro" id="IPR001754">
    <property type="entry name" value="OMPdeCOase_dom"/>
</dbReference>
<dbReference type="InterPro" id="IPR011060">
    <property type="entry name" value="RibuloseP-bd_barrel"/>
</dbReference>
<dbReference type="NCBIfam" id="NF001273">
    <property type="entry name" value="PRK00230.1"/>
    <property type="match status" value="1"/>
</dbReference>
<dbReference type="NCBIfam" id="TIGR01740">
    <property type="entry name" value="pyrF"/>
    <property type="match status" value="1"/>
</dbReference>
<dbReference type="PANTHER" id="PTHR32119">
    <property type="entry name" value="OROTIDINE 5'-PHOSPHATE DECARBOXYLASE"/>
    <property type="match status" value="1"/>
</dbReference>
<dbReference type="PANTHER" id="PTHR32119:SF2">
    <property type="entry name" value="OROTIDINE 5'-PHOSPHATE DECARBOXYLASE"/>
    <property type="match status" value="1"/>
</dbReference>
<dbReference type="Pfam" id="PF00215">
    <property type="entry name" value="OMPdecase"/>
    <property type="match status" value="1"/>
</dbReference>
<dbReference type="SMART" id="SM00934">
    <property type="entry name" value="OMPdecase"/>
    <property type="match status" value="1"/>
</dbReference>
<dbReference type="SUPFAM" id="SSF51366">
    <property type="entry name" value="Ribulose-phoshate binding barrel"/>
    <property type="match status" value="1"/>
</dbReference>
<dbReference type="PROSITE" id="PS00156">
    <property type="entry name" value="OMPDECASE"/>
    <property type="match status" value="1"/>
</dbReference>
<accession>Q5FNS8</accession>
<proteinExistence type="inferred from homology"/>